<keyword id="KW-0119">Carbohydrate metabolism</keyword>
<keyword id="KW-0413">Isomerase</keyword>
<keyword id="KW-1185">Reference proteome</keyword>
<sequence length="229" mass="23904">MSKLSHSEVLIMIQGGLVVSCQPVDDGPMDQPAIVAAMAQAAIVGGAVGVRIEGVQNLKATRPMVTAPIIAIVKRDLPESAVRITPFLADIDQLAAAGADIIAVDGTDRERPVAVVAALERIHAQGCLAMADCSTLAEGLYCQQLGFDIIGSTMSGYTGGELPVEPDYQLVKDLKSAGCYVMAEGRYNSPALAKSAMQMGADCVTVGSALTRLEHMVSWFAVAVQSAKE</sequence>
<dbReference type="EC" id="5.1.3.9" evidence="1"/>
<dbReference type="EMBL" id="AE017143">
    <property type="protein sequence ID" value="AAP96593.1"/>
    <property type="molecule type" value="Genomic_DNA"/>
</dbReference>
<dbReference type="RefSeq" id="WP_010945622.1">
    <property type="nucleotide sequence ID" value="NC_002940.2"/>
</dbReference>
<dbReference type="SMR" id="Q7VKN0"/>
<dbReference type="STRING" id="233412.HD_1852"/>
<dbReference type="KEGG" id="hdu:HD_1852"/>
<dbReference type="eggNOG" id="COG3010">
    <property type="taxonomic scope" value="Bacteria"/>
</dbReference>
<dbReference type="HOGENOM" id="CLU_086300_0_0_6"/>
<dbReference type="OrthoDB" id="9810372at2"/>
<dbReference type="UniPathway" id="UPA00629">
    <property type="reaction ID" value="UER00682"/>
</dbReference>
<dbReference type="Proteomes" id="UP000001022">
    <property type="component" value="Chromosome"/>
</dbReference>
<dbReference type="GO" id="GO:0005829">
    <property type="term" value="C:cytosol"/>
    <property type="evidence" value="ECO:0007669"/>
    <property type="project" value="TreeGrafter"/>
</dbReference>
<dbReference type="GO" id="GO:0047465">
    <property type="term" value="F:N-acylglucosamine-6-phosphate 2-epimerase activity"/>
    <property type="evidence" value="ECO:0007669"/>
    <property type="project" value="UniProtKB-EC"/>
</dbReference>
<dbReference type="GO" id="GO:0005975">
    <property type="term" value="P:carbohydrate metabolic process"/>
    <property type="evidence" value="ECO:0007669"/>
    <property type="project" value="UniProtKB-UniRule"/>
</dbReference>
<dbReference type="GO" id="GO:0006053">
    <property type="term" value="P:N-acetylmannosamine catabolic process"/>
    <property type="evidence" value="ECO:0007669"/>
    <property type="project" value="TreeGrafter"/>
</dbReference>
<dbReference type="GO" id="GO:0019262">
    <property type="term" value="P:N-acetylneuraminate catabolic process"/>
    <property type="evidence" value="ECO:0007669"/>
    <property type="project" value="UniProtKB-UniRule"/>
</dbReference>
<dbReference type="CDD" id="cd04729">
    <property type="entry name" value="NanE"/>
    <property type="match status" value="1"/>
</dbReference>
<dbReference type="FunFam" id="3.20.20.70:FF:000035">
    <property type="entry name" value="Putative N-acetylmannosamine-6-phosphate 2-epimerase"/>
    <property type="match status" value="1"/>
</dbReference>
<dbReference type="Gene3D" id="3.20.20.70">
    <property type="entry name" value="Aldolase class I"/>
    <property type="match status" value="1"/>
</dbReference>
<dbReference type="HAMAP" id="MF_01235">
    <property type="entry name" value="ManNAc6P_epimer"/>
    <property type="match status" value="1"/>
</dbReference>
<dbReference type="InterPro" id="IPR013785">
    <property type="entry name" value="Aldolase_TIM"/>
</dbReference>
<dbReference type="InterPro" id="IPR007260">
    <property type="entry name" value="NanE"/>
</dbReference>
<dbReference type="InterPro" id="IPR011060">
    <property type="entry name" value="RibuloseP-bd_barrel"/>
</dbReference>
<dbReference type="NCBIfam" id="NF002231">
    <property type="entry name" value="PRK01130.1"/>
    <property type="match status" value="1"/>
</dbReference>
<dbReference type="PANTHER" id="PTHR36204">
    <property type="entry name" value="N-ACETYLMANNOSAMINE-6-PHOSPHATE 2-EPIMERASE-RELATED"/>
    <property type="match status" value="1"/>
</dbReference>
<dbReference type="PANTHER" id="PTHR36204:SF1">
    <property type="entry name" value="N-ACETYLMANNOSAMINE-6-PHOSPHATE 2-EPIMERASE-RELATED"/>
    <property type="match status" value="1"/>
</dbReference>
<dbReference type="Pfam" id="PF04131">
    <property type="entry name" value="NanE"/>
    <property type="match status" value="1"/>
</dbReference>
<dbReference type="SUPFAM" id="SSF51366">
    <property type="entry name" value="Ribulose-phoshate binding barrel"/>
    <property type="match status" value="1"/>
</dbReference>
<protein>
    <recommendedName>
        <fullName evidence="1">Putative N-acetylmannosamine-6-phosphate 2-epimerase</fullName>
        <ecNumber evidence="1">5.1.3.9</ecNumber>
    </recommendedName>
    <alternativeName>
        <fullName evidence="1">ManNAc-6-P epimerase</fullName>
    </alternativeName>
</protein>
<gene>
    <name evidence="1" type="primary">nanE</name>
    <name type="ordered locus">HD_1852</name>
</gene>
<proteinExistence type="inferred from homology"/>
<organism>
    <name type="scientific">Haemophilus ducreyi (strain 35000HP / ATCC 700724)</name>
    <dbReference type="NCBI Taxonomy" id="233412"/>
    <lineage>
        <taxon>Bacteria</taxon>
        <taxon>Pseudomonadati</taxon>
        <taxon>Pseudomonadota</taxon>
        <taxon>Gammaproteobacteria</taxon>
        <taxon>Pasteurellales</taxon>
        <taxon>Pasteurellaceae</taxon>
        <taxon>Haemophilus</taxon>
    </lineage>
</organism>
<comment type="function">
    <text evidence="1">Converts N-acetylmannosamine-6-phosphate (ManNAc-6-P) to N-acetylglucosamine-6-phosphate (GlcNAc-6-P).</text>
</comment>
<comment type="catalytic activity">
    <reaction evidence="1">
        <text>an N-acyl-D-glucosamine 6-phosphate = an N-acyl-D-mannosamine 6-phosphate</text>
        <dbReference type="Rhea" id="RHEA:23932"/>
        <dbReference type="ChEBI" id="CHEBI:57599"/>
        <dbReference type="ChEBI" id="CHEBI:57666"/>
        <dbReference type="EC" id="5.1.3.9"/>
    </reaction>
</comment>
<comment type="pathway">
    <text evidence="1">Amino-sugar metabolism; N-acetylneuraminate degradation; D-fructose 6-phosphate from N-acetylneuraminate: step 3/5.</text>
</comment>
<comment type="similarity">
    <text evidence="1">Belongs to the NanE family.</text>
</comment>
<feature type="chain" id="PRO_0000179775" description="Putative N-acetylmannosamine-6-phosphate 2-epimerase">
    <location>
        <begin position="1"/>
        <end position="229"/>
    </location>
</feature>
<accession>Q7VKN0</accession>
<reference key="1">
    <citation type="submission" date="2003-06" db="EMBL/GenBank/DDBJ databases">
        <title>The complete genome sequence of Haemophilus ducreyi.</title>
        <authorList>
            <person name="Munson R.S. Jr."/>
            <person name="Ray W.C."/>
            <person name="Mahairas G."/>
            <person name="Sabo P."/>
            <person name="Mungur R."/>
            <person name="Johnson L."/>
            <person name="Nguyen D."/>
            <person name="Wang J."/>
            <person name="Forst C."/>
            <person name="Hood L."/>
        </authorList>
    </citation>
    <scope>NUCLEOTIDE SEQUENCE [LARGE SCALE GENOMIC DNA]</scope>
    <source>
        <strain>35000HP / ATCC 700724</strain>
    </source>
</reference>
<name>NANE_HAEDU</name>
<evidence type="ECO:0000255" key="1">
    <source>
        <dbReference type="HAMAP-Rule" id="MF_01235"/>
    </source>
</evidence>